<accession>P49774</accession>
<accession>Q9R734</accession>
<sequence>MATIFTKIINRELPGRFVYEDDDVVAFLTIEPMTQGHTLVVPCAEIDQWQNVDPAIFGRVIAVSQLIGKGVCRAFNAERAGVIIAGFEVPHLHIHVFPTHSLSNFSFANVDRNPSPESLDAAQDKIKAALTQLA</sequence>
<organism>
    <name type="scientific">Mycobacterium leprae (strain TN)</name>
    <dbReference type="NCBI Taxonomy" id="272631"/>
    <lineage>
        <taxon>Bacteria</taxon>
        <taxon>Bacillati</taxon>
        <taxon>Actinomycetota</taxon>
        <taxon>Actinomycetes</taxon>
        <taxon>Mycobacteriales</taxon>
        <taxon>Mycobacteriaceae</taxon>
        <taxon>Mycobacterium</taxon>
    </lineage>
</organism>
<keyword id="KW-1185">Reference proteome</keyword>
<dbReference type="EMBL" id="U15187">
    <property type="protein sequence ID" value="AAA63136.1"/>
    <property type="status" value="ALT_INIT"/>
    <property type="molecule type" value="Genomic_DNA"/>
</dbReference>
<dbReference type="EMBL" id="Z95151">
    <property type="protein sequence ID" value="CAB08415.1"/>
    <property type="molecule type" value="Genomic_DNA"/>
</dbReference>
<dbReference type="EMBL" id="AL583924">
    <property type="protein sequence ID" value="CAC31193.1"/>
    <property type="molecule type" value="Genomic_DNA"/>
</dbReference>
<dbReference type="PIR" id="A87189">
    <property type="entry name" value="A87189"/>
</dbReference>
<dbReference type="RefSeq" id="NP_302460.1">
    <property type="nucleotide sequence ID" value="NC_002677.1"/>
</dbReference>
<dbReference type="RefSeq" id="WP_010908780.1">
    <property type="nucleotide sequence ID" value="NC_002677.1"/>
</dbReference>
<dbReference type="SMR" id="P49774"/>
<dbReference type="STRING" id="272631.gene:17576095"/>
<dbReference type="KEGG" id="mle:ML2237"/>
<dbReference type="PATRIC" id="fig|272631.5.peg.4250"/>
<dbReference type="Leproma" id="ML2237"/>
<dbReference type="eggNOG" id="COG0537">
    <property type="taxonomic scope" value="Bacteria"/>
</dbReference>
<dbReference type="HOGENOM" id="CLU_056776_3_1_11"/>
<dbReference type="OrthoDB" id="9784774at2"/>
<dbReference type="Proteomes" id="UP000000806">
    <property type="component" value="Chromosome"/>
</dbReference>
<dbReference type="GO" id="GO:0003824">
    <property type="term" value="F:catalytic activity"/>
    <property type="evidence" value="ECO:0007669"/>
    <property type="project" value="InterPro"/>
</dbReference>
<dbReference type="GO" id="GO:0009117">
    <property type="term" value="P:nucleotide metabolic process"/>
    <property type="evidence" value="ECO:0007669"/>
    <property type="project" value="TreeGrafter"/>
</dbReference>
<dbReference type="Gene3D" id="3.30.428.10">
    <property type="entry name" value="HIT-like"/>
    <property type="match status" value="1"/>
</dbReference>
<dbReference type="InterPro" id="IPR019808">
    <property type="entry name" value="Histidine_triad_CS"/>
</dbReference>
<dbReference type="InterPro" id="IPR001310">
    <property type="entry name" value="Histidine_triad_HIT"/>
</dbReference>
<dbReference type="InterPro" id="IPR011146">
    <property type="entry name" value="HIT-like"/>
</dbReference>
<dbReference type="InterPro" id="IPR036265">
    <property type="entry name" value="HIT-like_sf"/>
</dbReference>
<dbReference type="PANTHER" id="PTHR46648:SF1">
    <property type="entry name" value="ADENOSINE 5'-MONOPHOSPHORAMIDASE HNT1"/>
    <property type="match status" value="1"/>
</dbReference>
<dbReference type="PANTHER" id="PTHR46648">
    <property type="entry name" value="HIT FAMILY PROTEIN 1"/>
    <property type="match status" value="1"/>
</dbReference>
<dbReference type="Pfam" id="PF01230">
    <property type="entry name" value="HIT"/>
    <property type="match status" value="1"/>
</dbReference>
<dbReference type="PRINTS" id="PR00332">
    <property type="entry name" value="HISTRIAD"/>
</dbReference>
<dbReference type="SUPFAM" id="SSF54197">
    <property type="entry name" value="HIT-like"/>
    <property type="match status" value="1"/>
</dbReference>
<dbReference type="PROSITE" id="PS00892">
    <property type="entry name" value="HIT_1"/>
    <property type="match status" value="1"/>
</dbReference>
<dbReference type="PROSITE" id="PS51084">
    <property type="entry name" value="HIT_2"/>
    <property type="match status" value="1"/>
</dbReference>
<proteinExistence type="predicted"/>
<name>YHI1_MYCLE</name>
<feature type="chain" id="PRO_0000109824" description="Uncharacterized HIT-like protein ML2237">
    <location>
        <begin position="1"/>
        <end position="134"/>
    </location>
</feature>
<feature type="domain" description="HIT" evidence="2">
    <location>
        <begin position="4"/>
        <end position="107"/>
    </location>
</feature>
<feature type="short sequence motif" description="Histidine triad motif">
    <location>
        <begin position="91"/>
        <end position="95"/>
    </location>
</feature>
<evidence type="ECO:0000250" key="1">
    <source>
        <dbReference type="UniProtKB" id="P9WML3"/>
    </source>
</evidence>
<evidence type="ECO:0000255" key="2">
    <source>
        <dbReference type="PROSITE-ProRule" id="PRU00464"/>
    </source>
</evidence>
<gene>
    <name type="ordered locus">ML2237</name>
    <name type="ORF">MLCB5.04c</name>
    <name type="ORF">u296a</name>
</gene>
<reference key="1">
    <citation type="submission" date="1994-09" db="EMBL/GenBank/DDBJ databases">
        <authorList>
            <person name="Smith D.R."/>
            <person name="Robison K."/>
        </authorList>
    </citation>
    <scope>NUCLEOTIDE SEQUENCE [GENOMIC DNA]</scope>
</reference>
<reference key="2">
    <citation type="journal article" date="2001" name="Nature">
        <title>Massive gene decay in the leprosy bacillus.</title>
        <authorList>
            <person name="Cole S.T."/>
            <person name="Eiglmeier K."/>
            <person name="Parkhill J."/>
            <person name="James K.D."/>
            <person name="Thomson N.R."/>
            <person name="Wheeler P.R."/>
            <person name="Honore N."/>
            <person name="Garnier T."/>
            <person name="Churcher C.M."/>
            <person name="Harris D.E."/>
            <person name="Mungall K.L."/>
            <person name="Basham D."/>
            <person name="Brown D."/>
            <person name="Chillingworth T."/>
            <person name="Connor R."/>
            <person name="Davies R.M."/>
            <person name="Devlin K."/>
            <person name="Duthoy S."/>
            <person name="Feltwell T."/>
            <person name="Fraser A."/>
            <person name="Hamlin N."/>
            <person name="Holroyd S."/>
            <person name="Hornsby T."/>
            <person name="Jagels K."/>
            <person name="Lacroix C."/>
            <person name="Maclean J."/>
            <person name="Moule S."/>
            <person name="Murphy L.D."/>
            <person name="Oliver K."/>
            <person name="Quail M.A."/>
            <person name="Rajandream M.A."/>
            <person name="Rutherford K.M."/>
            <person name="Rutter S."/>
            <person name="Seeger K."/>
            <person name="Simon S."/>
            <person name="Simmonds M."/>
            <person name="Skelton J."/>
            <person name="Squares R."/>
            <person name="Squares S."/>
            <person name="Stevens K."/>
            <person name="Taylor K."/>
            <person name="Whitehead S."/>
            <person name="Woodward J.R."/>
            <person name="Barrell B.G."/>
        </authorList>
    </citation>
    <scope>NUCLEOTIDE SEQUENCE [LARGE SCALE GENOMIC DNA]</scope>
    <source>
        <strain>TN</strain>
    </source>
</reference>
<protein>
    <recommendedName>
        <fullName>Uncharacterized HIT-like protein ML2237</fullName>
    </recommendedName>
</protein>
<comment type="sequence caution" evidence="1">
    <conflict type="erroneous initiation">
        <sequence resource="EMBL-CDS" id="AAA63136"/>
    </conflict>
    <text>Extended N-terminus.</text>
</comment>